<protein>
    <recommendedName>
        <fullName>Cytochrome b6/f complex 12.6 kDa peptide</fullName>
    </recommendedName>
</protein>
<accession>P83688</accession>
<feature type="chain" id="PRO_0000217291" description="Cytochrome b6/f complex 12.6 kDa peptide">
    <location>
        <begin position="1"/>
        <end position="30" status="greater than"/>
    </location>
</feature>
<feature type="region of interest" description="Disordered" evidence="1">
    <location>
        <begin position="1"/>
        <end position="30"/>
    </location>
</feature>
<feature type="compositionally biased region" description="Gly residues" evidence="1">
    <location>
        <begin position="13"/>
        <end position="23"/>
    </location>
</feature>
<feature type="non-terminal residue" evidence="3">
    <location>
        <position position="30"/>
    </location>
</feature>
<keyword id="KW-0150">Chloroplast</keyword>
<keyword id="KW-0903">Direct protein sequencing</keyword>
<keyword id="KW-0249">Electron transport</keyword>
<keyword id="KW-0602">Photosynthesis</keyword>
<keyword id="KW-0934">Plastid</keyword>
<keyword id="KW-0813">Transport</keyword>
<organism evidence="4">
    <name type="scientific">Euglena gracilis</name>
    <dbReference type="NCBI Taxonomy" id="3039"/>
    <lineage>
        <taxon>Eukaryota</taxon>
        <taxon>Discoba</taxon>
        <taxon>Euglenozoa</taxon>
        <taxon>Euglenida</taxon>
        <taxon>Spirocuta</taxon>
        <taxon>Euglenophyceae</taxon>
        <taxon>Euglenales</taxon>
        <taxon>Euglenaceae</taxon>
        <taxon>Euglena</taxon>
    </lineage>
</organism>
<dbReference type="GO" id="GO:0009507">
    <property type="term" value="C:chloroplast"/>
    <property type="evidence" value="ECO:0000314"/>
    <property type="project" value="UniProtKB"/>
</dbReference>
<dbReference type="GO" id="GO:0015979">
    <property type="term" value="P:photosynthesis"/>
    <property type="evidence" value="ECO:0007669"/>
    <property type="project" value="UniProtKB-KW"/>
</dbReference>
<name>CC12_EUGGR</name>
<comment type="function">
    <text evidence="3">May be a component of the cytochrome b6/f complex which is part of the photosynthetic respiratory chain.</text>
</comment>
<comment type="subcellular location">
    <subcellularLocation>
        <location evidence="2">Plastid</location>
        <location evidence="2">Chloroplast</location>
    </subcellularLocation>
</comment>
<evidence type="ECO:0000256" key="1">
    <source>
        <dbReference type="SAM" id="MobiDB-lite"/>
    </source>
</evidence>
<evidence type="ECO:0000269" key="2">
    <source>
    </source>
</evidence>
<evidence type="ECO:0000303" key="3">
    <source>
    </source>
</evidence>
<evidence type="ECO:0000305" key="4"/>
<reference evidence="4" key="1">
    <citation type="journal article" date="2003" name="Biochim. Biophys. Acta">
        <title>Cytochrome f and subunit IV, two essential components of the photosynthetic bf complex typically encoded in the chloroplast genome, are nucleus-encoded in Euglena gracilis.</title>
        <authorList>
            <person name="Santillan Torres J.L."/>
            <person name="Atteia A."/>
            <person name="Claros M.G."/>
            <person name="Gonzalez-Halphen D."/>
        </authorList>
    </citation>
    <scope>PROTEIN SEQUENCE</scope>
    <scope>SUBCELLULAR LOCATION</scope>
</reference>
<proteinExistence type="evidence at protein level"/>
<sequence length="30" mass="2764">SGSGVRSAKKGGKAQGGQAGVGYKGSTEPG</sequence>